<sequence>MQVTVETKEGLERVLTITVPAANIEDAVSAELRNIAKNRRFDGFRKGKVPMKMVAKMYGQAVRNDVMGEVMQRHFIEAIVKEKINPAGAPTFTPVEFAEGKDLVFSASFEVYPEVALQGLDKVVVEKPQVEVKDEDVAEMLETLRKQQSTWADADIAAEDGTRATINFVGSIDGEEFEGGKAENFPLEMGQGRMIPGFEDGIKGKKAGDELTIDVNFPEEYHAENLKGKAAQFAIKVVKVEARELPELNDEFVAKFGAEGGVEGLKAEVRKNMERELAQAVKNKIKEQAINGLVEQNNIDVPSALIDQEVQVLRQQAVQRFGGNADTAPELPRELFEEQAKRRVVVGLLLGEVIKSEELKADDEKVKALINEMASAYEDPTEVVAYYEGNEQMMNNMRNVALEEQAVEAILAKAQVSEKAFGFNELMNQQPA</sequence>
<name>TIG_ALIFM</name>
<reference key="1">
    <citation type="submission" date="2008-08" db="EMBL/GenBank/DDBJ databases">
        <title>Complete sequence of Vibrio fischeri strain MJ11.</title>
        <authorList>
            <person name="Mandel M.J."/>
            <person name="Stabb E.V."/>
            <person name="Ruby E.G."/>
            <person name="Ferriera S."/>
            <person name="Johnson J."/>
            <person name="Kravitz S."/>
            <person name="Beeson K."/>
            <person name="Sutton G."/>
            <person name="Rogers Y.-H."/>
            <person name="Friedman R."/>
            <person name="Frazier M."/>
            <person name="Venter J.C."/>
        </authorList>
    </citation>
    <scope>NUCLEOTIDE SEQUENCE [LARGE SCALE GENOMIC DNA]</scope>
    <source>
        <strain>MJ11</strain>
    </source>
</reference>
<feature type="chain" id="PRO_1000115598" description="Trigger factor">
    <location>
        <begin position="1"/>
        <end position="432"/>
    </location>
</feature>
<feature type="domain" description="PPIase FKBP-type" evidence="1">
    <location>
        <begin position="161"/>
        <end position="246"/>
    </location>
</feature>
<protein>
    <recommendedName>
        <fullName evidence="1">Trigger factor</fullName>
        <shortName evidence="1">TF</shortName>
        <ecNumber evidence="1">5.2.1.8</ecNumber>
    </recommendedName>
    <alternativeName>
        <fullName evidence="1">PPIase</fullName>
    </alternativeName>
</protein>
<proteinExistence type="inferred from homology"/>
<evidence type="ECO:0000255" key="1">
    <source>
        <dbReference type="HAMAP-Rule" id="MF_00303"/>
    </source>
</evidence>
<keyword id="KW-0131">Cell cycle</keyword>
<keyword id="KW-0132">Cell division</keyword>
<keyword id="KW-0143">Chaperone</keyword>
<keyword id="KW-0963">Cytoplasm</keyword>
<keyword id="KW-0413">Isomerase</keyword>
<keyword id="KW-0697">Rotamase</keyword>
<dbReference type="EC" id="5.2.1.8" evidence="1"/>
<dbReference type="EMBL" id="CP001139">
    <property type="protein sequence ID" value="ACH66269.1"/>
    <property type="molecule type" value="Genomic_DNA"/>
</dbReference>
<dbReference type="RefSeq" id="WP_012533616.1">
    <property type="nucleotide sequence ID" value="NC_011184.1"/>
</dbReference>
<dbReference type="SMR" id="B5FBZ7"/>
<dbReference type="KEGG" id="vfm:VFMJ11_0832"/>
<dbReference type="HOGENOM" id="CLU_033058_2_0_6"/>
<dbReference type="Proteomes" id="UP000001857">
    <property type="component" value="Chromosome I"/>
</dbReference>
<dbReference type="GO" id="GO:0005737">
    <property type="term" value="C:cytoplasm"/>
    <property type="evidence" value="ECO:0007669"/>
    <property type="project" value="UniProtKB-SubCell"/>
</dbReference>
<dbReference type="GO" id="GO:0003755">
    <property type="term" value="F:peptidyl-prolyl cis-trans isomerase activity"/>
    <property type="evidence" value="ECO:0007669"/>
    <property type="project" value="UniProtKB-UniRule"/>
</dbReference>
<dbReference type="GO" id="GO:0044183">
    <property type="term" value="F:protein folding chaperone"/>
    <property type="evidence" value="ECO:0007669"/>
    <property type="project" value="TreeGrafter"/>
</dbReference>
<dbReference type="GO" id="GO:0043022">
    <property type="term" value="F:ribosome binding"/>
    <property type="evidence" value="ECO:0007669"/>
    <property type="project" value="TreeGrafter"/>
</dbReference>
<dbReference type="GO" id="GO:0051083">
    <property type="term" value="P:'de novo' cotranslational protein folding"/>
    <property type="evidence" value="ECO:0007669"/>
    <property type="project" value="TreeGrafter"/>
</dbReference>
<dbReference type="GO" id="GO:0051301">
    <property type="term" value="P:cell division"/>
    <property type="evidence" value="ECO:0007669"/>
    <property type="project" value="UniProtKB-KW"/>
</dbReference>
<dbReference type="GO" id="GO:0061077">
    <property type="term" value="P:chaperone-mediated protein folding"/>
    <property type="evidence" value="ECO:0007669"/>
    <property type="project" value="TreeGrafter"/>
</dbReference>
<dbReference type="GO" id="GO:0015031">
    <property type="term" value="P:protein transport"/>
    <property type="evidence" value="ECO:0007669"/>
    <property type="project" value="UniProtKB-UniRule"/>
</dbReference>
<dbReference type="GO" id="GO:0043335">
    <property type="term" value="P:protein unfolding"/>
    <property type="evidence" value="ECO:0007669"/>
    <property type="project" value="TreeGrafter"/>
</dbReference>
<dbReference type="FunFam" id="3.10.50.40:FF:000001">
    <property type="entry name" value="Trigger factor"/>
    <property type="match status" value="1"/>
</dbReference>
<dbReference type="FunFam" id="3.30.70.1050:FF:000001">
    <property type="entry name" value="Trigger factor"/>
    <property type="match status" value="1"/>
</dbReference>
<dbReference type="Gene3D" id="3.10.50.40">
    <property type="match status" value="1"/>
</dbReference>
<dbReference type="Gene3D" id="3.30.70.1050">
    <property type="entry name" value="Trigger factor ribosome-binding domain"/>
    <property type="match status" value="1"/>
</dbReference>
<dbReference type="Gene3D" id="1.10.3120.10">
    <property type="entry name" value="Trigger factor, C-terminal domain"/>
    <property type="match status" value="1"/>
</dbReference>
<dbReference type="HAMAP" id="MF_00303">
    <property type="entry name" value="Trigger_factor_Tig"/>
    <property type="match status" value="1"/>
</dbReference>
<dbReference type="InterPro" id="IPR046357">
    <property type="entry name" value="PPIase_dom_sf"/>
</dbReference>
<dbReference type="InterPro" id="IPR001179">
    <property type="entry name" value="PPIase_FKBP_dom"/>
</dbReference>
<dbReference type="InterPro" id="IPR005215">
    <property type="entry name" value="Trig_fac"/>
</dbReference>
<dbReference type="InterPro" id="IPR008880">
    <property type="entry name" value="Trigger_fac_C"/>
</dbReference>
<dbReference type="InterPro" id="IPR037041">
    <property type="entry name" value="Trigger_fac_C_sf"/>
</dbReference>
<dbReference type="InterPro" id="IPR008881">
    <property type="entry name" value="Trigger_fac_ribosome-bd_bac"/>
</dbReference>
<dbReference type="InterPro" id="IPR036611">
    <property type="entry name" value="Trigger_fac_ribosome-bd_sf"/>
</dbReference>
<dbReference type="InterPro" id="IPR027304">
    <property type="entry name" value="Trigger_fact/SurA_dom_sf"/>
</dbReference>
<dbReference type="NCBIfam" id="TIGR00115">
    <property type="entry name" value="tig"/>
    <property type="match status" value="1"/>
</dbReference>
<dbReference type="PANTHER" id="PTHR30560">
    <property type="entry name" value="TRIGGER FACTOR CHAPERONE AND PEPTIDYL-PROLYL CIS/TRANS ISOMERASE"/>
    <property type="match status" value="1"/>
</dbReference>
<dbReference type="PANTHER" id="PTHR30560:SF3">
    <property type="entry name" value="TRIGGER FACTOR-LIKE PROTEIN TIG, CHLOROPLASTIC"/>
    <property type="match status" value="1"/>
</dbReference>
<dbReference type="Pfam" id="PF00254">
    <property type="entry name" value="FKBP_C"/>
    <property type="match status" value="1"/>
</dbReference>
<dbReference type="Pfam" id="PF05698">
    <property type="entry name" value="Trigger_C"/>
    <property type="match status" value="1"/>
</dbReference>
<dbReference type="Pfam" id="PF05697">
    <property type="entry name" value="Trigger_N"/>
    <property type="match status" value="1"/>
</dbReference>
<dbReference type="PIRSF" id="PIRSF003095">
    <property type="entry name" value="Trigger_factor"/>
    <property type="match status" value="1"/>
</dbReference>
<dbReference type="SUPFAM" id="SSF54534">
    <property type="entry name" value="FKBP-like"/>
    <property type="match status" value="1"/>
</dbReference>
<dbReference type="SUPFAM" id="SSF109998">
    <property type="entry name" value="Triger factor/SurA peptide-binding domain-like"/>
    <property type="match status" value="1"/>
</dbReference>
<dbReference type="SUPFAM" id="SSF102735">
    <property type="entry name" value="Trigger factor ribosome-binding domain"/>
    <property type="match status" value="1"/>
</dbReference>
<dbReference type="PROSITE" id="PS50059">
    <property type="entry name" value="FKBP_PPIASE"/>
    <property type="match status" value="1"/>
</dbReference>
<organism>
    <name type="scientific">Aliivibrio fischeri (strain MJ11)</name>
    <name type="common">Vibrio fischeri</name>
    <dbReference type="NCBI Taxonomy" id="388396"/>
    <lineage>
        <taxon>Bacteria</taxon>
        <taxon>Pseudomonadati</taxon>
        <taxon>Pseudomonadota</taxon>
        <taxon>Gammaproteobacteria</taxon>
        <taxon>Vibrionales</taxon>
        <taxon>Vibrionaceae</taxon>
        <taxon>Aliivibrio</taxon>
    </lineage>
</organism>
<gene>
    <name evidence="1" type="primary">tig</name>
    <name type="ordered locus">VFMJ11_0832</name>
</gene>
<comment type="function">
    <text evidence="1">Involved in protein export. Acts as a chaperone by maintaining the newly synthesized protein in an open conformation. Functions as a peptidyl-prolyl cis-trans isomerase.</text>
</comment>
<comment type="catalytic activity">
    <reaction evidence="1">
        <text>[protein]-peptidylproline (omega=180) = [protein]-peptidylproline (omega=0)</text>
        <dbReference type="Rhea" id="RHEA:16237"/>
        <dbReference type="Rhea" id="RHEA-COMP:10747"/>
        <dbReference type="Rhea" id="RHEA-COMP:10748"/>
        <dbReference type="ChEBI" id="CHEBI:83833"/>
        <dbReference type="ChEBI" id="CHEBI:83834"/>
        <dbReference type="EC" id="5.2.1.8"/>
    </reaction>
</comment>
<comment type="subcellular location">
    <subcellularLocation>
        <location>Cytoplasm</location>
    </subcellularLocation>
    <text evidence="1">About half TF is bound to the ribosome near the polypeptide exit tunnel while the other half is free in the cytoplasm.</text>
</comment>
<comment type="domain">
    <text evidence="1">Consists of 3 domains; the N-terminus binds the ribosome, the middle domain has PPIase activity, while the C-terminus has intrinsic chaperone activity on its own.</text>
</comment>
<comment type="similarity">
    <text evidence="1">Belongs to the FKBP-type PPIase family. Tig subfamily.</text>
</comment>
<accession>B5FBZ7</accession>